<sequence length="161" mass="18300">MTKTGVYPGTFDPITNGHLDVIKRALKIFDELIVAVAMSSYKKTPIFTVEERVHFIAQTTKDLKNLKVEVFDGLLVNFIKEKKAVAIVRGLRAVSDYEFELQLAHANRRLFRDIETVFLMPSEEYSFLSSSLVKEIAYFGGSVKSLVPPIVEKALRNKFKK</sequence>
<dbReference type="EC" id="2.7.7.3" evidence="1"/>
<dbReference type="EMBL" id="CP001147">
    <property type="protein sequence ID" value="ACI20782.1"/>
    <property type="molecule type" value="Genomic_DNA"/>
</dbReference>
<dbReference type="RefSeq" id="WP_012545514.1">
    <property type="nucleotide sequence ID" value="NC_011296.1"/>
</dbReference>
<dbReference type="RefSeq" id="YP_002248644.1">
    <property type="nucleotide sequence ID" value="NC_011296.1"/>
</dbReference>
<dbReference type="SMR" id="B5YK79"/>
<dbReference type="FunCoup" id="B5YK79">
    <property type="interactions" value="394"/>
</dbReference>
<dbReference type="STRING" id="289376.THEYE_A0803"/>
<dbReference type="EnsemblBacteria" id="ACI20782">
    <property type="protein sequence ID" value="ACI20782"/>
    <property type="gene ID" value="THEYE_A0803"/>
</dbReference>
<dbReference type="KEGG" id="tye:THEYE_A0803"/>
<dbReference type="PATRIC" id="fig|289376.4.peg.793"/>
<dbReference type="eggNOG" id="COG0669">
    <property type="taxonomic scope" value="Bacteria"/>
</dbReference>
<dbReference type="HOGENOM" id="CLU_100149_0_1_0"/>
<dbReference type="InParanoid" id="B5YK79"/>
<dbReference type="OrthoDB" id="9806661at2"/>
<dbReference type="UniPathway" id="UPA00241">
    <property type="reaction ID" value="UER00355"/>
</dbReference>
<dbReference type="Proteomes" id="UP000000718">
    <property type="component" value="Chromosome"/>
</dbReference>
<dbReference type="GO" id="GO:0005737">
    <property type="term" value="C:cytoplasm"/>
    <property type="evidence" value="ECO:0007669"/>
    <property type="project" value="UniProtKB-SubCell"/>
</dbReference>
<dbReference type="GO" id="GO:0005524">
    <property type="term" value="F:ATP binding"/>
    <property type="evidence" value="ECO:0007669"/>
    <property type="project" value="UniProtKB-KW"/>
</dbReference>
<dbReference type="GO" id="GO:0004595">
    <property type="term" value="F:pantetheine-phosphate adenylyltransferase activity"/>
    <property type="evidence" value="ECO:0007669"/>
    <property type="project" value="UniProtKB-UniRule"/>
</dbReference>
<dbReference type="GO" id="GO:0015937">
    <property type="term" value="P:coenzyme A biosynthetic process"/>
    <property type="evidence" value="ECO:0007669"/>
    <property type="project" value="UniProtKB-UniRule"/>
</dbReference>
<dbReference type="CDD" id="cd02163">
    <property type="entry name" value="PPAT"/>
    <property type="match status" value="1"/>
</dbReference>
<dbReference type="Gene3D" id="3.40.50.620">
    <property type="entry name" value="HUPs"/>
    <property type="match status" value="1"/>
</dbReference>
<dbReference type="HAMAP" id="MF_00151">
    <property type="entry name" value="PPAT_bact"/>
    <property type="match status" value="1"/>
</dbReference>
<dbReference type="InterPro" id="IPR004821">
    <property type="entry name" value="Cyt_trans-like"/>
</dbReference>
<dbReference type="InterPro" id="IPR001980">
    <property type="entry name" value="PPAT"/>
</dbReference>
<dbReference type="InterPro" id="IPR014729">
    <property type="entry name" value="Rossmann-like_a/b/a_fold"/>
</dbReference>
<dbReference type="NCBIfam" id="TIGR01510">
    <property type="entry name" value="coaD_prev_kdtB"/>
    <property type="match status" value="1"/>
</dbReference>
<dbReference type="NCBIfam" id="TIGR00125">
    <property type="entry name" value="cyt_tran_rel"/>
    <property type="match status" value="1"/>
</dbReference>
<dbReference type="PANTHER" id="PTHR21342">
    <property type="entry name" value="PHOSPHOPANTETHEINE ADENYLYLTRANSFERASE"/>
    <property type="match status" value="1"/>
</dbReference>
<dbReference type="PANTHER" id="PTHR21342:SF1">
    <property type="entry name" value="PHOSPHOPANTETHEINE ADENYLYLTRANSFERASE"/>
    <property type="match status" value="1"/>
</dbReference>
<dbReference type="Pfam" id="PF01467">
    <property type="entry name" value="CTP_transf_like"/>
    <property type="match status" value="1"/>
</dbReference>
<dbReference type="PRINTS" id="PR01020">
    <property type="entry name" value="LPSBIOSNTHSS"/>
</dbReference>
<dbReference type="SUPFAM" id="SSF52374">
    <property type="entry name" value="Nucleotidylyl transferase"/>
    <property type="match status" value="1"/>
</dbReference>
<protein>
    <recommendedName>
        <fullName evidence="1">Phosphopantetheine adenylyltransferase</fullName>
        <ecNumber evidence="1">2.7.7.3</ecNumber>
    </recommendedName>
    <alternativeName>
        <fullName evidence="1">Dephospho-CoA pyrophosphorylase</fullName>
    </alternativeName>
    <alternativeName>
        <fullName evidence="1">Pantetheine-phosphate adenylyltransferase</fullName>
        <shortName evidence="1">PPAT</shortName>
    </alternativeName>
</protein>
<comment type="function">
    <text evidence="1">Reversibly transfers an adenylyl group from ATP to 4'-phosphopantetheine, yielding dephospho-CoA (dPCoA) and pyrophosphate.</text>
</comment>
<comment type="catalytic activity">
    <reaction evidence="1">
        <text>(R)-4'-phosphopantetheine + ATP + H(+) = 3'-dephospho-CoA + diphosphate</text>
        <dbReference type="Rhea" id="RHEA:19801"/>
        <dbReference type="ChEBI" id="CHEBI:15378"/>
        <dbReference type="ChEBI" id="CHEBI:30616"/>
        <dbReference type="ChEBI" id="CHEBI:33019"/>
        <dbReference type="ChEBI" id="CHEBI:57328"/>
        <dbReference type="ChEBI" id="CHEBI:61723"/>
        <dbReference type="EC" id="2.7.7.3"/>
    </reaction>
</comment>
<comment type="cofactor">
    <cofactor evidence="1">
        <name>Mg(2+)</name>
        <dbReference type="ChEBI" id="CHEBI:18420"/>
    </cofactor>
</comment>
<comment type="pathway">
    <text evidence="1">Cofactor biosynthesis; coenzyme A biosynthesis; CoA from (R)-pantothenate: step 4/5.</text>
</comment>
<comment type="subunit">
    <text evidence="1">Homohexamer.</text>
</comment>
<comment type="subcellular location">
    <subcellularLocation>
        <location evidence="1">Cytoplasm</location>
    </subcellularLocation>
</comment>
<comment type="similarity">
    <text evidence="1">Belongs to the bacterial CoaD family.</text>
</comment>
<accession>B5YK79</accession>
<name>COAD_THEYD</name>
<proteinExistence type="inferred from homology"/>
<reference key="1">
    <citation type="submission" date="2008-08" db="EMBL/GenBank/DDBJ databases">
        <title>The complete genome sequence of Thermodesulfovibrio yellowstonii strain ATCC 51303 / DSM 11347 / YP87.</title>
        <authorList>
            <person name="Dodson R.J."/>
            <person name="Durkin A.S."/>
            <person name="Wu M."/>
            <person name="Eisen J."/>
            <person name="Sutton G."/>
        </authorList>
    </citation>
    <scope>NUCLEOTIDE SEQUENCE [LARGE SCALE GENOMIC DNA]</scope>
    <source>
        <strain>ATCC 51303 / DSM 11347 / YP87</strain>
    </source>
</reference>
<evidence type="ECO:0000255" key="1">
    <source>
        <dbReference type="HAMAP-Rule" id="MF_00151"/>
    </source>
</evidence>
<gene>
    <name evidence="1" type="primary">coaD</name>
    <name type="ordered locus">THEYE_A0803</name>
</gene>
<keyword id="KW-0067">ATP-binding</keyword>
<keyword id="KW-0173">Coenzyme A biosynthesis</keyword>
<keyword id="KW-0963">Cytoplasm</keyword>
<keyword id="KW-0460">Magnesium</keyword>
<keyword id="KW-0547">Nucleotide-binding</keyword>
<keyword id="KW-0548">Nucleotidyltransferase</keyword>
<keyword id="KW-1185">Reference proteome</keyword>
<keyword id="KW-0808">Transferase</keyword>
<organism>
    <name type="scientific">Thermodesulfovibrio yellowstonii (strain ATCC 51303 / DSM 11347 / YP87)</name>
    <dbReference type="NCBI Taxonomy" id="289376"/>
    <lineage>
        <taxon>Bacteria</taxon>
        <taxon>Pseudomonadati</taxon>
        <taxon>Nitrospirota</taxon>
        <taxon>Thermodesulfovibrionia</taxon>
        <taxon>Thermodesulfovibrionales</taxon>
        <taxon>Thermodesulfovibrionaceae</taxon>
        <taxon>Thermodesulfovibrio</taxon>
    </lineage>
</organism>
<feature type="chain" id="PRO_1000118086" description="Phosphopantetheine adenylyltransferase">
    <location>
        <begin position="1"/>
        <end position="161"/>
    </location>
</feature>
<feature type="binding site" evidence="1">
    <location>
        <begin position="10"/>
        <end position="11"/>
    </location>
    <ligand>
        <name>ATP</name>
        <dbReference type="ChEBI" id="CHEBI:30616"/>
    </ligand>
</feature>
<feature type="binding site" evidence="1">
    <location>
        <position position="10"/>
    </location>
    <ligand>
        <name>substrate</name>
    </ligand>
</feature>
<feature type="binding site" evidence="1">
    <location>
        <position position="18"/>
    </location>
    <ligand>
        <name>ATP</name>
        <dbReference type="ChEBI" id="CHEBI:30616"/>
    </ligand>
</feature>
<feature type="binding site" evidence="1">
    <location>
        <position position="42"/>
    </location>
    <ligand>
        <name>substrate</name>
    </ligand>
</feature>
<feature type="binding site" evidence="1">
    <location>
        <position position="75"/>
    </location>
    <ligand>
        <name>substrate</name>
    </ligand>
</feature>
<feature type="binding site" evidence="1">
    <location>
        <position position="89"/>
    </location>
    <ligand>
        <name>substrate</name>
    </ligand>
</feature>
<feature type="binding site" evidence="1">
    <location>
        <begin position="90"/>
        <end position="92"/>
    </location>
    <ligand>
        <name>ATP</name>
        <dbReference type="ChEBI" id="CHEBI:30616"/>
    </ligand>
</feature>
<feature type="binding site" evidence="1">
    <location>
        <position position="100"/>
    </location>
    <ligand>
        <name>ATP</name>
        <dbReference type="ChEBI" id="CHEBI:30616"/>
    </ligand>
</feature>
<feature type="binding site" evidence="1">
    <location>
        <begin position="125"/>
        <end position="131"/>
    </location>
    <ligand>
        <name>ATP</name>
        <dbReference type="ChEBI" id="CHEBI:30616"/>
    </ligand>
</feature>
<feature type="site" description="Transition state stabilizer" evidence="1">
    <location>
        <position position="18"/>
    </location>
</feature>